<dbReference type="EC" id="7.1.1.-" evidence="1"/>
<dbReference type="EMBL" id="DQ400350">
    <property type="protein sequence ID" value="ABD48498.1"/>
    <property type="molecule type" value="Genomic_DNA"/>
</dbReference>
<dbReference type="RefSeq" id="YP_001595511.1">
    <property type="nucleotide sequence ID" value="NC_010109.1"/>
</dbReference>
<dbReference type="SMR" id="A9L999"/>
<dbReference type="GeneID" id="5787514"/>
<dbReference type="GO" id="GO:0009535">
    <property type="term" value="C:chloroplast thylakoid membrane"/>
    <property type="evidence" value="ECO:0007669"/>
    <property type="project" value="UniProtKB-SubCell"/>
</dbReference>
<dbReference type="GO" id="GO:0008137">
    <property type="term" value="F:NADH dehydrogenase (ubiquinone) activity"/>
    <property type="evidence" value="ECO:0007669"/>
    <property type="project" value="InterPro"/>
</dbReference>
<dbReference type="GO" id="GO:0048038">
    <property type="term" value="F:quinone binding"/>
    <property type="evidence" value="ECO:0007669"/>
    <property type="project" value="UniProtKB-KW"/>
</dbReference>
<dbReference type="GO" id="GO:0019684">
    <property type="term" value="P:photosynthesis, light reaction"/>
    <property type="evidence" value="ECO:0007669"/>
    <property type="project" value="UniProtKB-UniRule"/>
</dbReference>
<dbReference type="FunFam" id="3.30.460.80:FF:000004">
    <property type="entry name" value="NAD(P)H-quinone oxidoreductase subunit J, chloroplastic"/>
    <property type="match status" value="1"/>
</dbReference>
<dbReference type="Gene3D" id="3.30.460.80">
    <property type="entry name" value="NADH:ubiquinone oxidoreductase, 30kDa subunit"/>
    <property type="match status" value="1"/>
</dbReference>
<dbReference type="HAMAP" id="MF_01357">
    <property type="entry name" value="NDH1_NuoC"/>
    <property type="match status" value="1"/>
</dbReference>
<dbReference type="InterPro" id="IPR010218">
    <property type="entry name" value="NADH_DH_suC"/>
</dbReference>
<dbReference type="InterPro" id="IPR037232">
    <property type="entry name" value="NADH_quin_OxRdtase_su_C/D-like"/>
</dbReference>
<dbReference type="InterPro" id="IPR001268">
    <property type="entry name" value="NADH_UbQ_OxRdtase_30kDa_su"/>
</dbReference>
<dbReference type="InterPro" id="IPR020396">
    <property type="entry name" value="NADH_UbQ_OxRdtase_CS"/>
</dbReference>
<dbReference type="NCBIfam" id="NF009141">
    <property type="entry name" value="PRK12494.1"/>
    <property type="match status" value="1"/>
</dbReference>
<dbReference type="PANTHER" id="PTHR10884:SF14">
    <property type="entry name" value="NADH DEHYDROGENASE [UBIQUINONE] IRON-SULFUR PROTEIN 3, MITOCHONDRIAL"/>
    <property type="match status" value="1"/>
</dbReference>
<dbReference type="PANTHER" id="PTHR10884">
    <property type="entry name" value="NADH DEHYDROGENASE UBIQUINONE IRON-SULFUR PROTEIN 3"/>
    <property type="match status" value="1"/>
</dbReference>
<dbReference type="Pfam" id="PF00329">
    <property type="entry name" value="Complex1_30kDa"/>
    <property type="match status" value="1"/>
</dbReference>
<dbReference type="SUPFAM" id="SSF143243">
    <property type="entry name" value="Nqo5-like"/>
    <property type="match status" value="1"/>
</dbReference>
<dbReference type="PROSITE" id="PS00542">
    <property type="entry name" value="COMPLEX1_30K"/>
    <property type="match status" value="1"/>
</dbReference>
<accession>A9L999</accession>
<reference key="1">
    <citation type="journal article" date="2008" name="J. Mol. Evol.">
        <title>Complete sequence of the Duckweed (Lemna minor) chloroplast genome: structural organization and phylogenetic relationships to other angiosperms.</title>
        <authorList>
            <person name="Mardanov A.V."/>
            <person name="Ravin N.V."/>
            <person name="Kuznetsov B.B."/>
            <person name="Samigullin T.H."/>
            <person name="Antonov A.S."/>
            <person name="Kolganova T.V."/>
            <person name="Skyabin K.G."/>
        </authorList>
    </citation>
    <scope>NUCLEOTIDE SEQUENCE [LARGE SCALE GENOMIC DNA]</scope>
</reference>
<gene>
    <name evidence="1" type="primary">ndhJ</name>
</gene>
<protein>
    <recommendedName>
        <fullName evidence="1">NAD(P)H-quinone oxidoreductase subunit J, chloroplastic</fullName>
        <ecNumber evidence="1">7.1.1.-</ecNumber>
    </recommendedName>
    <alternativeName>
        <fullName>NAD(P)H dehydrogenase subunit J</fullName>
    </alternativeName>
    <alternativeName>
        <fullName evidence="1">NADH-plastoquinone oxidoreductase subunit J</fullName>
    </alternativeName>
</protein>
<comment type="function">
    <text evidence="1">NDH shuttles electrons from NAD(P)H:plastoquinone, via FMN and iron-sulfur (Fe-S) centers, to quinones in the photosynthetic chain and possibly in a chloroplast respiratory chain. The immediate electron acceptor for the enzyme in this species is believed to be plastoquinone. Couples the redox reaction to proton translocation, and thus conserves the redox energy in a proton gradient.</text>
</comment>
<comment type="catalytic activity">
    <reaction evidence="1">
        <text>a plastoquinone + NADH + (n+1) H(+)(in) = a plastoquinol + NAD(+) + n H(+)(out)</text>
        <dbReference type="Rhea" id="RHEA:42608"/>
        <dbReference type="Rhea" id="RHEA-COMP:9561"/>
        <dbReference type="Rhea" id="RHEA-COMP:9562"/>
        <dbReference type="ChEBI" id="CHEBI:15378"/>
        <dbReference type="ChEBI" id="CHEBI:17757"/>
        <dbReference type="ChEBI" id="CHEBI:57540"/>
        <dbReference type="ChEBI" id="CHEBI:57945"/>
        <dbReference type="ChEBI" id="CHEBI:62192"/>
    </reaction>
</comment>
<comment type="catalytic activity">
    <reaction evidence="1">
        <text>a plastoquinone + NADPH + (n+1) H(+)(in) = a plastoquinol + NADP(+) + n H(+)(out)</text>
        <dbReference type="Rhea" id="RHEA:42612"/>
        <dbReference type="Rhea" id="RHEA-COMP:9561"/>
        <dbReference type="Rhea" id="RHEA-COMP:9562"/>
        <dbReference type="ChEBI" id="CHEBI:15378"/>
        <dbReference type="ChEBI" id="CHEBI:17757"/>
        <dbReference type="ChEBI" id="CHEBI:57783"/>
        <dbReference type="ChEBI" id="CHEBI:58349"/>
        <dbReference type="ChEBI" id="CHEBI:62192"/>
    </reaction>
</comment>
<comment type="subunit">
    <text evidence="1">NDH is composed of at least 16 different subunits, 5 of which are encoded in the nucleus.</text>
</comment>
<comment type="subcellular location">
    <subcellularLocation>
        <location evidence="1">Plastid</location>
        <location evidence="1">Chloroplast thylakoid membrane</location>
        <topology evidence="1">Peripheral membrane protein</topology>
        <orientation evidence="1">Stromal side</orientation>
    </subcellularLocation>
</comment>
<comment type="similarity">
    <text evidence="1">Belongs to the complex I 30 kDa subunit family.</text>
</comment>
<organism>
    <name type="scientific">Lemna minor</name>
    <name type="common">Common duckweed</name>
    <dbReference type="NCBI Taxonomy" id="4472"/>
    <lineage>
        <taxon>Eukaryota</taxon>
        <taxon>Viridiplantae</taxon>
        <taxon>Streptophyta</taxon>
        <taxon>Embryophyta</taxon>
        <taxon>Tracheophyta</taxon>
        <taxon>Spermatophyta</taxon>
        <taxon>Magnoliopsida</taxon>
        <taxon>Liliopsida</taxon>
        <taxon>Araceae</taxon>
        <taxon>Lemnoideae</taxon>
        <taxon>Lemna</taxon>
    </lineage>
</organism>
<evidence type="ECO:0000255" key="1">
    <source>
        <dbReference type="HAMAP-Rule" id="MF_01357"/>
    </source>
</evidence>
<sequence length="158" mass="18681">MQSHLSAWLVKHELVHRSLGFDYQGIETLQIKPEDWDSIAVISYVYGYNYLRSQCAYDVAPGGFLASVYHLTRIQYGVDQPEEVCIKVFVPRENPIVPSVFWVWRSADFQERESYDMFGISYDNHPRLKRILMPESWIGWPLRKDYITPNFYEIQDAH</sequence>
<keyword id="KW-0150">Chloroplast</keyword>
<keyword id="KW-0472">Membrane</keyword>
<keyword id="KW-0520">NAD</keyword>
<keyword id="KW-0521">NADP</keyword>
<keyword id="KW-0934">Plastid</keyword>
<keyword id="KW-0618">Plastoquinone</keyword>
<keyword id="KW-0874">Quinone</keyword>
<keyword id="KW-0793">Thylakoid</keyword>
<keyword id="KW-1278">Translocase</keyword>
<keyword id="KW-0813">Transport</keyword>
<name>NDHJ_LEMMI</name>
<proteinExistence type="inferred from homology"/>
<geneLocation type="chloroplast"/>
<feature type="chain" id="PRO_0000358276" description="NAD(P)H-quinone oxidoreductase subunit J, chloroplastic">
    <location>
        <begin position="1"/>
        <end position="158"/>
    </location>
</feature>